<comment type="function">
    <text evidence="1">Catalyzes the condensation of the acetyl group of acetyl-CoA with 3-methyl-2-oxobutanoate (2-ketoisovalerate) to form 3-carboxy-3-hydroxy-4-methylpentanoate (2-isopropylmalate).</text>
</comment>
<comment type="catalytic activity">
    <reaction evidence="1">
        <text>3-methyl-2-oxobutanoate + acetyl-CoA + H2O = (2S)-2-isopropylmalate + CoA + H(+)</text>
        <dbReference type="Rhea" id="RHEA:21524"/>
        <dbReference type="ChEBI" id="CHEBI:1178"/>
        <dbReference type="ChEBI" id="CHEBI:11851"/>
        <dbReference type="ChEBI" id="CHEBI:15377"/>
        <dbReference type="ChEBI" id="CHEBI:15378"/>
        <dbReference type="ChEBI" id="CHEBI:57287"/>
        <dbReference type="ChEBI" id="CHEBI:57288"/>
        <dbReference type="EC" id="2.3.3.13"/>
    </reaction>
</comment>
<comment type="cofactor">
    <cofactor evidence="1">
        <name>Mn(2+)</name>
        <dbReference type="ChEBI" id="CHEBI:29035"/>
    </cofactor>
</comment>
<comment type="pathway">
    <text evidence="1">Amino-acid biosynthesis; L-leucine biosynthesis; L-leucine from 3-methyl-2-oxobutanoate: step 1/4.</text>
</comment>
<comment type="subunit">
    <text evidence="1">Homodimer.</text>
</comment>
<comment type="subcellular location">
    <subcellularLocation>
        <location evidence="1">Cytoplasm</location>
    </subcellularLocation>
</comment>
<comment type="similarity">
    <text evidence="1">Belongs to the alpha-IPM synthase/homocitrate synthase family. LeuA type 1 subfamily.</text>
</comment>
<name>LEU1_ECOHS</name>
<protein>
    <recommendedName>
        <fullName evidence="1">2-isopropylmalate synthase</fullName>
        <ecNumber evidence="1">2.3.3.13</ecNumber>
    </recommendedName>
    <alternativeName>
        <fullName evidence="1">Alpha-IPM synthase</fullName>
    </alternativeName>
    <alternativeName>
        <fullName evidence="1">Alpha-isopropylmalate synthase</fullName>
    </alternativeName>
</protein>
<organism>
    <name type="scientific">Escherichia coli O9:H4 (strain HS)</name>
    <dbReference type="NCBI Taxonomy" id="331112"/>
    <lineage>
        <taxon>Bacteria</taxon>
        <taxon>Pseudomonadati</taxon>
        <taxon>Pseudomonadota</taxon>
        <taxon>Gammaproteobacteria</taxon>
        <taxon>Enterobacterales</taxon>
        <taxon>Enterobacteriaceae</taxon>
        <taxon>Escherichia</taxon>
    </lineage>
</organism>
<sequence>MSQQVIIFDTTLRDGEQALQASLSVKEKLQIALALERMGVDVMEVGFPVSSPGDFESVQTIARQVKNSRVCALARCVEKDIDVAAESLKVAEAFRIHTFIATSPMHIATKLRSTLDEVIERAIYMVKRARNYTDDVEFSCEDAGRTPIADLARVVEAAINAGATTINIPDTVGYTMPFEFAGIISGLYERVPNIDKAIISVHTHDDLGLAVGNSLAAVHAGARQVEGAMNGIGERAGNCSLEEVIMAIKVRKDILNVHTAINHQEIWRTSQLVSQICNMPIPANKAIVGSGAFAHSSGIHQDGVLKNRENYEIMTPESIGLNQIQLNLTSRSGRAAVKHRMDEMGYKESEYNLDNLYDAFLKLADKKGQVFDYDLEALAFIGKQQEEPEHFRLDYFSVQSGSNDIATAAVKLACGEEVKAEAANGNGPVDAVYQAINRITDYNVELVKYSLTAKGHGKDALGQVDIVANYNGRRFHGVGLATDIVESSAKAMVHVLNNIWRAAEVEKELQRKAQHNENNKETV</sequence>
<keyword id="KW-0028">Amino-acid biosynthesis</keyword>
<keyword id="KW-0100">Branched-chain amino acid biosynthesis</keyword>
<keyword id="KW-0963">Cytoplasm</keyword>
<keyword id="KW-0432">Leucine biosynthesis</keyword>
<keyword id="KW-0464">Manganese</keyword>
<keyword id="KW-0479">Metal-binding</keyword>
<keyword id="KW-0808">Transferase</keyword>
<feature type="chain" id="PRO_1000149190" description="2-isopropylmalate synthase">
    <location>
        <begin position="1"/>
        <end position="523"/>
    </location>
</feature>
<feature type="domain" description="Pyruvate carboxyltransferase" evidence="1">
    <location>
        <begin position="5"/>
        <end position="267"/>
    </location>
</feature>
<feature type="region of interest" description="Regulatory domain" evidence="1">
    <location>
        <begin position="392"/>
        <end position="523"/>
    </location>
</feature>
<feature type="binding site" evidence="1">
    <location>
        <position position="14"/>
    </location>
    <ligand>
        <name>Mn(2+)</name>
        <dbReference type="ChEBI" id="CHEBI:29035"/>
    </ligand>
</feature>
<feature type="binding site" evidence="1">
    <location>
        <position position="202"/>
    </location>
    <ligand>
        <name>Mn(2+)</name>
        <dbReference type="ChEBI" id="CHEBI:29035"/>
    </ligand>
</feature>
<feature type="binding site" evidence="1">
    <location>
        <position position="204"/>
    </location>
    <ligand>
        <name>Mn(2+)</name>
        <dbReference type="ChEBI" id="CHEBI:29035"/>
    </ligand>
</feature>
<feature type="binding site" evidence="1">
    <location>
        <position position="238"/>
    </location>
    <ligand>
        <name>Mn(2+)</name>
        <dbReference type="ChEBI" id="CHEBI:29035"/>
    </ligand>
</feature>
<accession>A7ZW25</accession>
<gene>
    <name evidence="1" type="primary">leuA</name>
    <name type="ordered locus">EcHS_A0079</name>
</gene>
<proteinExistence type="inferred from homology"/>
<dbReference type="EC" id="2.3.3.13" evidence="1"/>
<dbReference type="EMBL" id="CP000802">
    <property type="protein sequence ID" value="ABV04479.1"/>
    <property type="molecule type" value="Genomic_DNA"/>
</dbReference>
<dbReference type="RefSeq" id="WP_000082846.1">
    <property type="nucleotide sequence ID" value="NC_009800.1"/>
</dbReference>
<dbReference type="SMR" id="A7ZW25"/>
<dbReference type="GeneID" id="75202109"/>
<dbReference type="KEGG" id="ecx:EcHS_A0079"/>
<dbReference type="HOGENOM" id="CLU_022158_0_1_6"/>
<dbReference type="UniPathway" id="UPA00048">
    <property type="reaction ID" value="UER00070"/>
</dbReference>
<dbReference type="GO" id="GO:0005829">
    <property type="term" value="C:cytosol"/>
    <property type="evidence" value="ECO:0007669"/>
    <property type="project" value="TreeGrafter"/>
</dbReference>
<dbReference type="GO" id="GO:0003852">
    <property type="term" value="F:2-isopropylmalate synthase activity"/>
    <property type="evidence" value="ECO:0007669"/>
    <property type="project" value="UniProtKB-UniRule"/>
</dbReference>
<dbReference type="GO" id="GO:0003985">
    <property type="term" value="F:acetyl-CoA C-acetyltransferase activity"/>
    <property type="evidence" value="ECO:0007669"/>
    <property type="project" value="UniProtKB-UniRule"/>
</dbReference>
<dbReference type="GO" id="GO:0030145">
    <property type="term" value="F:manganese ion binding"/>
    <property type="evidence" value="ECO:0007669"/>
    <property type="project" value="UniProtKB-UniRule"/>
</dbReference>
<dbReference type="GO" id="GO:0009098">
    <property type="term" value="P:L-leucine biosynthetic process"/>
    <property type="evidence" value="ECO:0007669"/>
    <property type="project" value="UniProtKB-UniRule"/>
</dbReference>
<dbReference type="CDD" id="cd07940">
    <property type="entry name" value="DRE_TIM_IPMS"/>
    <property type="match status" value="1"/>
</dbReference>
<dbReference type="FunFam" id="1.10.238.260:FF:000001">
    <property type="entry name" value="2-isopropylmalate synthase"/>
    <property type="match status" value="1"/>
</dbReference>
<dbReference type="FunFam" id="3.20.20.70:FF:000010">
    <property type="entry name" value="2-isopropylmalate synthase"/>
    <property type="match status" value="1"/>
</dbReference>
<dbReference type="FunFam" id="3.30.160.270:FF:000001">
    <property type="entry name" value="2-isopropylmalate synthase"/>
    <property type="match status" value="1"/>
</dbReference>
<dbReference type="Gene3D" id="1.10.238.260">
    <property type="match status" value="1"/>
</dbReference>
<dbReference type="Gene3D" id="3.30.160.270">
    <property type="match status" value="1"/>
</dbReference>
<dbReference type="Gene3D" id="3.20.20.70">
    <property type="entry name" value="Aldolase class I"/>
    <property type="match status" value="1"/>
</dbReference>
<dbReference type="HAMAP" id="MF_01025">
    <property type="entry name" value="LeuA_type1"/>
    <property type="match status" value="1"/>
</dbReference>
<dbReference type="InterPro" id="IPR050073">
    <property type="entry name" value="2-IPM_HCS-like"/>
</dbReference>
<dbReference type="InterPro" id="IPR013709">
    <property type="entry name" value="2-isopropylmalate_synth_dimer"/>
</dbReference>
<dbReference type="InterPro" id="IPR002034">
    <property type="entry name" value="AIPM/Hcit_synth_CS"/>
</dbReference>
<dbReference type="InterPro" id="IPR013785">
    <property type="entry name" value="Aldolase_TIM"/>
</dbReference>
<dbReference type="InterPro" id="IPR054691">
    <property type="entry name" value="LeuA/HCS_post-cat"/>
</dbReference>
<dbReference type="InterPro" id="IPR036230">
    <property type="entry name" value="LeuA_allosteric_dom_sf"/>
</dbReference>
<dbReference type="InterPro" id="IPR005671">
    <property type="entry name" value="LeuA_bact_synth"/>
</dbReference>
<dbReference type="InterPro" id="IPR000891">
    <property type="entry name" value="PYR_CT"/>
</dbReference>
<dbReference type="NCBIfam" id="TIGR00973">
    <property type="entry name" value="leuA_bact"/>
    <property type="match status" value="1"/>
</dbReference>
<dbReference type="NCBIfam" id="NF002084">
    <property type="entry name" value="PRK00915.1-1"/>
    <property type="match status" value="1"/>
</dbReference>
<dbReference type="NCBIfam" id="NF002086">
    <property type="entry name" value="PRK00915.1-3"/>
    <property type="match status" value="1"/>
</dbReference>
<dbReference type="PANTHER" id="PTHR10277:SF9">
    <property type="entry name" value="2-ISOPROPYLMALATE SYNTHASE 1, CHLOROPLASTIC-RELATED"/>
    <property type="match status" value="1"/>
</dbReference>
<dbReference type="PANTHER" id="PTHR10277">
    <property type="entry name" value="HOMOCITRATE SYNTHASE-RELATED"/>
    <property type="match status" value="1"/>
</dbReference>
<dbReference type="Pfam" id="PF22617">
    <property type="entry name" value="HCS_D2"/>
    <property type="match status" value="1"/>
</dbReference>
<dbReference type="Pfam" id="PF00682">
    <property type="entry name" value="HMGL-like"/>
    <property type="match status" value="1"/>
</dbReference>
<dbReference type="Pfam" id="PF08502">
    <property type="entry name" value="LeuA_dimer"/>
    <property type="match status" value="1"/>
</dbReference>
<dbReference type="SMART" id="SM00917">
    <property type="entry name" value="LeuA_dimer"/>
    <property type="match status" value="1"/>
</dbReference>
<dbReference type="SUPFAM" id="SSF110921">
    <property type="entry name" value="2-isopropylmalate synthase LeuA, allosteric (dimerisation) domain"/>
    <property type="match status" value="1"/>
</dbReference>
<dbReference type="SUPFAM" id="SSF51569">
    <property type="entry name" value="Aldolase"/>
    <property type="match status" value="1"/>
</dbReference>
<dbReference type="PROSITE" id="PS00815">
    <property type="entry name" value="AIPM_HOMOCIT_SYNTH_1"/>
    <property type="match status" value="1"/>
</dbReference>
<dbReference type="PROSITE" id="PS00816">
    <property type="entry name" value="AIPM_HOMOCIT_SYNTH_2"/>
    <property type="match status" value="1"/>
</dbReference>
<dbReference type="PROSITE" id="PS50991">
    <property type="entry name" value="PYR_CT"/>
    <property type="match status" value="1"/>
</dbReference>
<reference key="1">
    <citation type="journal article" date="2008" name="J. Bacteriol.">
        <title>The pangenome structure of Escherichia coli: comparative genomic analysis of E. coli commensal and pathogenic isolates.</title>
        <authorList>
            <person name="Rasko D.A."/>
            <person name="Rosovitz M.J."/>
            <person name="Myers G.S.A."/>
            <person name="Mongodin E.F."/>
            <person name="Fricke W.F."/>
            <person name="Gajer P."/>
            <person name="Crabtree J."/>
            <person name="Sebaihia M."/>
            <person name="Thomson N.R."/>
            <person name="Chaudhuri R."/>
            <person name="Henderson I.R."/>
            <person name="Sperandio V."/>
            <person name="Ravel J."/>
        </authorList>
    </citation>
    <scope>NUCLEOTIDE SEQUENCE [LARGE SCALE GENOMIC DNA]</scope>
    <source>
        <strain>HS</strain>
    </source>
</reference>
<evidence type="ECO:0000255" key="1">
    <source>
        <dbReference type="HAMAP-Rule" id="MF_01025"/>
    </source>
</evidence>